<evidence type="ECO:0000250" key="1"/>
<evidence type="ECO:0000255" key="2"/>
<evidence type="ECO:0000255" key="3">
    <source>
        <dbReference type="PROSITE-ProRule" id="PRU01210"/>
    </source>
</evidence>
<evidence type="ECO:0000305" key="4"/>
<keyword id="KW-0027">Amidation</keyword>
<keyword id="KW-1015">Disulfide bond</keyword>
<keyword id="KW-0872">Ion channel impairing toxin</keyword>
<keyword id="KW-0528">Neurotoxin</keyword>
<keyword id="KW-0964">Secreted</keyword>
<keyword id="KW-0732">Signal</keyword>
<keyword id="KW-0800">Toxin</keyword>
<keyword id="KW-0738">Voltage-gated sodium channel impairing toxin</keyword>
<accession>Q68PG7</accession>
<name>SCX8_CENEX</name>
<organism>
    <name type="scientific">Centruroides exilicauda</name>
    <name type="common">Bark scorpion</name>
    <name type="synonym">Buthus exilicauda</name>
    <dbReference type="NCBI Taxonomy" id="6879"/>
    <lineage>
        <taxon>Eukaryota</taxon>
        <taxon>Metazoa</taxon>
        <taxon>Ecdysozoa</taxon>
        <taxon>Arthropoda</taxon>
        <taxon>Chelicerata</taxon>
        <taxon>Arachnida</taxon>
        <taxon>Scorpiones</taxon>
        <taxon>Buthida</taxon>
        <taxon>Buthoidea</taxon>
        <taxon>Buthidae</taxon>
        <taxon>Centruroides</taxon>
    </lineage>
</organism>
<proteinExistence type="evidence at transcript level"/>
<feature type="signal peptide" evidence="2">
    <location>
        <begin position="1" status="less than"/>
        <end position="1"/>
    </location>
</feature>
<feature type="chain" id="PRO_0000254076" description="Toxin Cex8">
    <location>
        <begin position="2"/>
        <end position="64"/>
    </location>
</feature>
<feature type="propeptide" id="PRO_0000254077">
    <location>
        <begin position="65"/>
        <end position="67"/>
    </location>
</feature>
<feature type="domain" description="LCN-type CS-alpha/beta" evidence="3">
    <location>
        <begin position="2"/>
        <end position="65"/>
    </location>
</feature>
<feature type="modified residue" description="Cysteine amide" evidence="2">
    <location>
        <position position="64"/>
    </location>
</feature>
<feature type="disulfide bond" evidence="3">
    <location>
        <begin position="13"/>
        <end position="64"/>
    </location>
</feature>
<feature type="disulfide bond" evidence="3">
    <location>
        <begin position="17"/>
        <end position="40"/>
    </location>
</feature>
<feature type="disulfide bond" evidence="3">
    <location>
        <begin position="26"/>
        <end position="45"/>
    </location>
</feature>
<feature type="disulfide bond" evidence="3">
    <location>
        <begin position="30"/>
        <end position="47"/>
    </location>
</feature>
<feature type="non-terminal residue">
    <location>
        <position position="1"/>
    </location>
</feature>
<protein>
    <recommendedName>
        <fullName>Toxin Cex8</fullName>
    </recommendedName>
</protein>
<sequence length="67" mass="7637">AKEGYLVNIYTGCKYSCWLLGENEYCIAECKEIGAGYGYCHGFGCWCEQFPENKPSYPYPEKSCGRK</sequence>
<comment type="function">
    <text evidence="1">Beta toxins bind voltage-independently at site-4 of sodium channels (Nav) and shift the voltage of activation toward more negative potentials thereby affecting sodium channel activation and promoting spontaneous and repetitive firing.</text>
</comment>
<comment type="subcellular location">
    <subcellularLocation>
        <location evidence="1">Secreted</location>
    </subcellularLocation>
</comment>
<comment type="tissue specificity">
    <text>Expressed by the venom gland.</text>
</comment>
<comment type="domain">
    <text evidence="4">Has the structural arrangement of an alpha-helix connected to antiparallel beta-sheets by disulfide bonds (CS-alpha/beta).</text>
</comment>
<comment type="similarity">
    <text evidence="4">Belongs to the long (4 C-C) scorpion toxin superfamily. Sodium channel inhibitor family. Beta subfamily.</text>
</comment>
<reference key="1">
    <citation type="journal article" date="2004" name="Biochimie">
        <title>Biochemical, genetic and physiological characterization of venom components from two species of scorpions: Centruroides exilicauda Wood and Centruroides sculpturatus Ewing.</title>
        <authorList>
            <person name="Valdez-Cruz N.A."/>
            <person name="Davila S."/>
            <person name="Licea A."/>
            <person name="Corona M."/>
            <person name="Zamudio F.Z."/>
            <person name="Garcia-Valdes J."/>
            <person name="Boyer L."/>
            <person name="Possani L.D."/>
        </authorList>
    </citation>
    <scope>NUCLEOTIDE SEQUENCE [MRNA]</scope>
    <source>
        <tissue>Venom gland</tissue>
    </source>
</reference>
<dbReference type="EMBL" id="AY649866">
    <property type="protein sequence ID" value="AAT97999.1"/>
    <property type="molecule type" value="mRNA"/>
</dbReference>
<dbReference type="SMR" id="Q68PG7"/>
<dbReference type="GO" id="GO:0005576">
    <property type="term" value="C:extracellular region"/>
    <property type="evidence" value="ECO:0007669"/>
    <property type="project" value="UniProtKB-SubCell"/>
</dbReference>
<dbReference type="GO" id="GO:0019871">
    <property type="term" value="F:sodium channel inhibitor activity"/>
    <property type="evidence" value="ECO:0007669"/>
    <property type="project" value="InterPro"/>
</dbReference>
<dbReference type="GO" id="GO:0090729">
    <property type="term" value="F:toxin activity"/>
    <property type="evidence" value="ECO:0007669"/>
    <property type="project" value="UniProtKB-KW"/>
</dbReference>
<dbReference type="GO" id="GO:0006952">
    <property type="term" value="P:defense response"/>
    <property type="evidence" value="ECO:0007669"/>
    <property type="project" value="InterPro"/>
</dbReference>
<dbReference type="CDD" id="cd23106">
    <property type="entry name" value="neurotoxins_LC_scorpion"/>
    <property type="match status" value="1"/>
</dbReference>
<dbReference type="Gene3D" id="3.30.30.10">
    <property type="entry name" value="Knottin, scorpion toxin-like"/>
    <property type="match status" value="1"/>
</dbReference>
<dbReference type="InterPro" id="IPR044062">
    <property type="entry name" value="LCN-type_CS_alpha_beta_dom"/>
</dbReference>
<dbReference type="InterPro" id="IPR003614">
    <property type="entry name" value="Scorpion_toxin-like"/>
</dbReference>
<dbReference type="InterPro" id="IPR036574">
    <property type="entry name" value="Scorpion_toxin-like_sf"/>
</dbReference>
<dbReference type="InterPro" id="IPR018218">
    <property type="entry name" value="Scorpion_toxinL"/>
</dbReference>
<dbReference type="InterPro" id="IPR002061">
    <property type="entry name" value="Scorpion_toxinL/defensin"/>
</dbReference>
<dbReference type="Pfam" id="PF00537">
    <property type="entry name" value="Toxin_3"/>
    <property type="match status" value="1"/>
</dbReference>
<dbReference type="PRINTS" id="PR00285">
    <property type="entry name" value="SCORPNTOXIN"/>
</dbReference>
<dbReference type="SMART" id="SM00505">
    <property type="entry name" value="Knot1"/>
    <property type="match status" value="1"/>
</dbReference>
<dbReference type="SUPFAM" id="SSF57095">
    <property type="entry name" value="Scorpion toxin-like"/>
    <property type="match status" value="1"/>
</dbReference>
<dbReference type="PROSITE" id="PS51863">
    <property type="entry name" value="LCN_CSAB"/>
    <property type="match status" value="1"/>
</dbReference>